<gene>
    <name type="primary">rpl23</name>
</gene>
<keyword id="KW-0150">Chloroplast</keyword>
<keyword id="KW-0934">Plastid</keyword>
<keyword id="KW-0687">Ribonucleoprotein</keyword>
<keyword id="KW-0689">Ribosomal protein</keyword>
<keyword id="KW-0694">RNA-binding</keyword>
<keyword id="KW-0699">rRNA-binding</keyword>
<comment type="function">
    <text evidence="1">Binds to 23S rRNA.</text>
</comment>
<comment type="subunit">
    <text evidence="1">Part of the 50S ribosomal subunit.</text>
</comment>
<comment type="subcellular location">
    <subcellularLocation>
        <location>Plastid</location>
        <location>Chloroplast</location>
    </subcellularLocation>
</comment>
<comment type="similarity">
    <text evidence="2">Belongs to the universal ribosomal protein uL23 family.</text>
</comment>
<name>RK23_STAPU</name>
<proteinExistence type="inferred from homology"/>
<organism>
    <name type="scientific">Staurastrum punctulatum</name>
    <name type="common">Green alga</name>
    <name type="synonym">Cosmoastrum punctulatum</name>
    <dbReference type="NCBI Taxonomy" id="102822"/>
    <lineage>
        <taxon>Eukaryota</taxon>
        <taxon>Viridiplantae</taxon>
        <taxon>Streptophyta</taxon>
        <taxon>Zygnematophyceae</taxon>
        <taxon>Zygnematophycidae</taxon>
        <taxon>Desmidiales</taxon>
        <taxon>Desmidiaceae</taxon>
        <taxon>Staurastrum</taxon>
    </lineage>
</organism>
<dbReference type="EMBL" id="AY958085">
    <property type="protein sequence ID" value="AAX45743.1"/>
    <property type="molecule type" value="Genomic_DNA"/>
</dbReference>
<dbReference type="RefSeq" id="YP_636418.1">
    <property type="nucleotide sequence ID" value="NC_008116.1"/>
</dbReference>
<dbReference type="SMR" id="Q32RV8"/>
<dbReference type="GeneID" id="4108605"/>
<dbReference type="GO" id="GO:0009507">
    <property type="term" value="C:chloroplast"/>
    <property type="evidence" value="ECO:0007669"/>
    <property type="project" value="UniProtKB-SubCell"/>
</dbReference>
<dbReference type="GO" id="GO:1990904">
    <property type="term" value="C:ribonucleoprotein complex"/>
    <property type="evidence" value="ECO:0007669"/>
    <property type="project" value="UniProtKB-KW"/>
</dbReference>
<dbReference type="GO" id="GO:0005840">
    <property type="term" value="C:ribosome"/>
    <property type="evidence" value="ECO:0007669"/>
    <property type="project" value="UniProtKB-KW"/>
</dbReference>
<dbReference type="GO" id="GO:0019843">
    <property type="term" value="F:rRNA binding"/>
    <property type="evidence" value="ECO:0007669"/>
    <property type="project" value="UniProtKB-UniRule"/>
</dbReference>
<dbReference type="GO" id="GO:0003735">
    <property type="term" value="F:structural constituent of ribosome"/>
    <property type="evidence" value="ECO:0007669"/>
    <property type="project" value="InterPro"/>
</dbReference>
<dbReference type="GO" id="GO:0006412">
    <property type="term" value="P:translation"/>
    <property type="evidence" value="ECO:0007669"/>
    <property type="project" value="UniProtKB-UniRule"/>
</dbReference>
<dbReference type="Gene3D" id="3.30.70.330">
    <property type="match status" value="1"/>
</dbReference>
<dbReference type="HAMAP" id="MF_01369_B">
    <property type="entry name" value="Ribosomal_uL23_B"/>
    <property type="match status" value="1"/>
</dbReference>
<dbReference type="InterPro" id="IPR012677">
    <property type="entry name" value="Nucleotide-bd_a/b_plait_sf"/>
</dbReference>
<dbReference type="InterPro" id="IPR013025">
    <property type="entry name" value="Ribosomal_uL23-like"/>
</dbReference>
<dbReference type="InterPro" id="IPR012678">
    <property type="entry name" value="Ribosomal_uL23/eL15/eS24_sf"/>
</dbReference>
<dbReference type="PANTHER" id="PTHR11620">
    <property type="entry name" value="60S RIBOSOMAL PROTEIN L23A"/>
    <property type="match status" value="1"/>
</dbReference>
<dbReference type="Pfam" id="PF00276">
    <property type="entry name" value="Ribosomal_L23"/>
    <property type="match status" value="1"/>
</dbReference>
<dbReference type="SUPFAM" id="SSF54189">
    <property type="entry name" value="Ribosomal proteins S24e, L23 and L15e"/>
    <property type="match status" value="1"/>
</dbReference>
<reference key="1">
    <citation type="journal article" date="2005" name="BMC Biol.">
        <title>The complete chloroplast DNA sequences of the charophycean green algae Staurastrum and Zygnema reveal that the chloroplast genome underwent extensive changes during the evolution of the Zygnematales.</title>
        <authorList>
            <person name="Turmel M."/>
            <person name="Otis C."/>
            <person name="Lemieux C."/>
        </authorList>
    </citation>
    <scope>NUCLEOTIDE SEQUENCE [LARGE SCALE GENOMIC DNA]</scope>
</reference>
<protein>
    <recommendedName>
        <fullName evidence="2">Large ribosomal subunit protein uL23c</fullName>
    </recommendedName>
    <alternativeName>
        <fullName>50S ribosomal protein L23, chloroplastic</fullName>
    </alternativeName>
</protein>
<feature type="chain" id="PRO_0000272936" description="Large ribosomal subunit protein uL23c">
    <location>
        <begin position="1"/>
        <end position="89"/>
    </location>
</feature>
<sequence>MIDYIKSPVLKFKLIRLLEKNQYTFDVDPKATKTDVKYWVENFFGVKVIGMNSHRPPRKMKRMGPTIGYPVRYKRMIVTLRAGDSIPLF</sequence>
<geneLocation type="chloroplast"/>
<accession>Q32RV8</accession>
<evidence type="ECO:0000250" key="1"/>
<evidence type="ECO:0000305" key="2"/>